<gene>
    <name evidence="1" type="primary">apt</name>
    <name type="ordered locus">BURPS668_0588</name>
</gene>
<feature type="chain" id="PRO_0000321348" description="Adenine phosphoribosyltransferase">
    <location>
        <begin position="1"/>
        <end position="187"/>
    </location>
</feature>
<name>APT_BURP6</name>
<sequence>MMSTSDAPLDPVEFIHSRIRTVPDWPQPGVMFRDITPLLQSAKALRVLVDLFVERYVDANLDYIAGLDARGFIIAPIVAYELSVGFVPIRKVGKLPYATQRESYALEYGTATVEIHEDACKPGDRVVIVDDLIATGGTMMAGKNLLERLGAVVVEGAAIVDLPDLGGSALLREAGLPLYTVTEFPGH</sequence>
<dbReference type="EC" id="2.4.2.7" evidence="1"/>
<dbReference type="EMBL" id="CP000570">
    <property type="protein sequence ID" value="ABN84827.1"/>
    <property type="status" value="ALT_INIT"/>
    <property type="molecule type" value="Genomic_DNA"/>
</dbReference>
<dbReference type="SMR" id="A3N5L9"/>
<dbReference type="KEGG" id="bpd:BURPS668_0588"/>
<dbReference type="HOGENOM" id="CLU_063339_3_0_4"/>
<dbReference type="UniPathway" id="UPA00588">
    <property type="reaction ID" value="UER00646"/>
</dbReference>
<dbReference type="GO" id="GO:0005737">
    <property type="term" value="C:cytoplasm"/>
    <property type="evidence" value="ECO:0007669"/>
    <property type="project" value="UniProtKB-SubCell"/>
</dbReference>
<dbReference type="GO" id="GO:0002055">
    <property type="term" value="F:adenine binding"/>
    <property type="evidence" value="ECO:0007669"/>
    <property type="project" value="TreeGrafter"/>
</dbReference>
<dbReference type="GO" id="GO:0003999">
    <property type="term" value="F:adenine phosphoribosyltransferase activity"/>
    <property type="evidence" value="ECO:0007669"/>
    <property type="project" value="UniProtKB-UniRule"/>
</dbReference>
<dbReference type="GO" id="GO:0016208">
    <property type="term" value="F:AMP binding"/>
    <property type="evidence" value="ECO:0007669"/>
    <property type="project" value="TreeGrafter"/>
</dbReference>
<dbReference type="GO" id="GO:0006168">
    <property type="term" value="P:adenine salvage"/>
    <property type="evidence" value="ECO:0007669"/>
    <property type="project" value="InterPro"/>
</dbReference>
<dbReference type="GO" id="GO:0044209">
    <property type="term" value="P:AMP salvage"/>
    <property type="evidence" value="ECO:0007669"/>
    <property type="project" value="UniProtKB-UniRule"/>
</dbReference>
<dbReference type="GO" id="GO:0006166">
    <property type="term" value="P:purine ribonucleoside salvage"/>
    <property type="evidence" value="ECO:0007669"/>
    <property type="project" value="UniProtKB-KW"/>
</dbReference>
<dbReference type="CDD" id="cd06223">
    <property type="entry name" value="PRTases_typeI"/>
    <property type="match status" value="1"/>
</dbReference>
<dbReference type="FunFam" id="3.40.50.2020:FF:000021">
    <property type="entry name" value="Adenine phosphoribosyltransferase"/>
    <property type="match status" value="1"/>
</dbReference>
<dbReference type="Gene3D" id="3.40.50.2020">
    <property type="match status" value="1"/>
</dbReference>
<dbReference type="HAMAP" id="MF_00004">
    <property type="entry name" value="Aden_phosphoribosyltr"/>
    <property type="match status" value="1"/>
</dbReference>
<dbReference type="InterPro" id="IPR005764">
    <property type="entry name" value="Ade_phspho_trans"/>
</dbReference>
<dbReference type="InterPro" id="IPR000836">
    <property type="entry name" value="PRibTrfase_dom"/>
</dbReference>
<dbReference type="InterPro" id="IPR029057">
    <property type="entry name" value="PRTase-like"/>
</dbReference>
<dbReference type="InterPro" id="IPR050054">
    <property type="entry name" value="UPRTase/APRTase"/>
</dbReference>
<dbReference type="NCBIfam" id="TIGR01090">
    <property type="entry name" value="apt"/>
    <property type="match status" value="1"/>
</dbReference>
<dbReference type="NCBIfam" id="NF002634">
    <property type="entry name" value="PRK02304.1-3"/>
    <property type="match status" value="1"/>
</dbReference>
<dbReference type="NCBIfam" id="NF002636">
    <property type="entry name" value="PRK02304.1-5"/>
    <property type="match status" value="1"/>
</dbReference>
<dbReference type="PANTHER" id="PTHR32315">
    <property type="entry name" value="ADENINE PHOSPHORIBOSYLTRANSFERASE"/>
    <property type="match status" value="1"/>
</dbReference>
<dbReference type="PANTHER" id="PTHR32315:SF3">
    <property type="entry name" value="ADENINE PHOSPHORIBOSYLTRANSFERASE"/>
    <property type="match status" value="1"/>
</dbReference>
<dbReference type="Pfam" id="PF00156">
    <property type="entry name" value="Pribosyltran"/>
    <property type="match status" value="1"/>
</dbReference>
<dbReference type="SUPFAM" id="SSF53271">
    <property type="entry name" value="PRTase-like"/>
    <property type="match status" value="1"/>
</dbReference>
<dbReference type="PROSITE" id="PS00103">
    <property type="entry name" value="PUR_PYR_PR_TRANSFER"/>
    <property type="match status" value="1"/>
</dbReference>
<reference key="1">
    <citation type="journal article" date="2010" name="Genome Biol. Evol.">
        <title>Continuing evolution of Burkholderia mallei through genome reduction and large-scale rearrangements.</title>
        <authorList>
            <person name="Losada L."/>
            <person name="Ronning C.M."/>
            <person name="DeShazer D."/>
            <person name="Woods D."/>
            <person name="Fedorova N."/>
            <person name="Kim H.S."/>
            <person name="Shabalina S.A."/>
            <person name="Pearson T.R."/>
            <person name="Brinkac L."/>
            <person name="Tan P."/>
            <person name="Nandi T."/>
            <person name="Crabtree J."/>
            <person name="Badger J."/>
            <person name="Beckstrom-Sternberg S."/>
            <person name="Saqib M."/>
            <person name="Schutzer S.E."/>
            <person name="Keim P."/>
            <person name="Nierman W.C."/>
        </authorList>
    </citation>
    <scope>NUCLEOTIDE SEQUENCE [LARGE SCALE GENOMIC DNA]</scope>
    <source>
        <strain>668</strain>
    </source>
</reference>
<accession>A3N5L9</accession>
<protein>
    <recommendedName>
        <fullName evidence="1">Adenine phosphoribosyltransferase</fullName>
        <shortName evidence="1">APRT</shortName>
        <ecNumber evidence="1">2.4.2.7</ecNumber>
    </recommendedName>
</protein>
<keyword id="KW-0963">Cytoplasm</keyword>
<keyword id="KW-0328">Glycosyltransferase</keyword>
<keyword id="KW-0660">Purine salvage</keyword>
<keyword id="KW-0808">Transferase</keyword>
<organism>
    <name type="scientific">Burkholderia pseudomallei (strain 668)</name>
    <dbReference type="NCBI Taxonomy" id="320373"/>
    <lineage>
        <taxon>Bacteria</taxon>
        <taxon>Pseudomonadati</taxon>
        <taxon>Pseudomonadota</taxon>
        <taxon>Betaproteobacteria</taxon>
        <taxon>Burkholderiales</taxon>
        <taxon>Burkholderiaceae</taxon>
        <taxon>Burkholderia</taxon>
        <taxon>pseudomallei group</taxon>
    </lineage>
</organism>
<evidence type="ECO:0000255" key="1">
    <source>
        <dbReference type="HAMAP-Rule" id="MF_00004"/>
    </source>
</evidence>
<evidence type="ECO:0000305" key="2"/>
<comment type="function">
    <text evidence="1">Catalyzes a salvage reaction resulting in the formation of AMP, that is energically less costly than de novo synthesis.</text>
</comment>
<comment type="catalytic activity">
    <reaction evidence="1">
        <text>AMP + diphosphate = 5-phospho-alpha-D-ribose 1-diphosphate + adenine</text>
        <dbReference type="Rhea" id="RHEA:16609"/>
        <dbReference type="ChEBI" id="CHEBI:16708"/>
        <dbReference type="ChEBI" id="CHEBI:33019"/>
        <dbReference type="ChEBI" id="CHEBI:58017"/>
        <dbReference type="ChEBI" id="CHEBI:456215"/>
        <dbReference type="EC" id="2.4.2.7"/>
    </reaction>
</comment>
<comment type="pathway">
    <text evidence="1">Purine metabolism; AMP biosynthesis via salvage pathway; AMP from adenine: step 1/1.</text>
</comment>
<comment type="subunit">
    <text evidence="1">Homodimer.</text>
</comment>
<comment type="subcellular location">
    <subcellularLocation>
        <location evidence="1">Cytoplasm</location>
    </subcellularLocation>
</comment>
<comment type="similarity">
    <text evidence="1">Belongs to the purine/pyrimidine phosphoribosyltransferase family.</text>
</comment>
<comment type="sequence caution" evidence="2">
    <conflict type="erroneous initiation">
        <sequence resource="EMBL-CDS" id="ABN84827"/>
    </conflict>
</comment>
<proteinExistence type="inferred from homology"/>